<proteinExistence type="evidence at protein level"/>
<accession>Q8A6L0</accession>
<dbReference type="EC" id="3.2.1.22"/>
<dbReference type="EMBL" id="AE015928">
    <property type="protein sequence ID" value="AAO76978.1"/>
    <property type="molecule type" value="Genomic_DNA"/>
</dbReference>
<dbReference type="RefSeq" id="NP_810784.1">
    <property type="nucleotide sequence ID" value="NC_004663.1"/>
</dbReference>
<dbReference type="RefSeq" id="WP_011108029.1">
    <property type="nucleotide sequence ID" value="NC_004663.1"/>
</dbReference>
<dbReference type="PDB" id="3A24">
    <property type="method" value="X-ray"/>
    <property type="resolution" value="2.30 A"/>
    <property type="chains" value="A/B=27-662"/>
</dbReference>
<dbReference type="PDB" id="5E1Q">
    <property type="method" value="X-ray"/>
    <property type="resolution" value="1.94 A"/>
    <property type="chains" value="A/B=27-662"/>
</dbReference>
<dbReference type="PDBsum" id="3A24"/>
<dbReference type="PDBsum" id="5E1Q"/>
<dbReference type="SMR" id="Q8A6L0"/>
<dbReference type="STRING" id="226186.BT_1871"/>
<dbReference type="CAZy" id="GH97">
    <property type="family name" value="Glycoside Hydrolase Family 97"/>
</dbReference>
<dbReference type="PaxDb" id="226186-BT_1871"/>
<dbReference type="DNASU" id="1075689"/>
<dbReference type="EnsemblBacteria" id="AAO76978">
    <property type="protein sequence ID" value="AAO76978"/>
    <property type="gene ID" value="BT_1871"/>
</dbReference>
<dbReference type="GeneID" id="60927858"/>
<dbReference type="KEGG" id="bth:BT_1871"/>
<dbReference type="PATRIC" id="fig|226186.12.peg.1923"/>
<dbReference type="eggNOG" id="COG4948">
    <property type="taxonomic scope" value="Bacteria"/>
</dbReference>
<dbReference type="HOGENOM" id="CLU_011166_0_0_10"/>
<dbReference type="InParanoid" id="Q8A6L0"/>
<dbReference type="OrthoDB" id="1109141at2"/>
<dbReference type="BRENDA" id="3.2.1.22">
    <property type="organism ID" value="709"/>
</dbReference>
<dbReference type="SABIO-RK" id="Q8A6L0"/>
<dbReference type="EvolutionaryTrace" id="Q8A6L0"/>
<dbReference type="Proteomes" id="UP000001414">
    <property type="component" value="Chromosome"/>
</dbReference>
<dbReference type="GO" id="GO:0004557">
    <property type="term" value="F:alpha-galactosidase activity"/>
    <property type="evidence" value="ECO:0007669"/>
    <property type="project" value="UniProtKB-EC"/>
</dbReference>
<dbReference type="GO" id="GO:0030246">
    <property type="term" value="F:carbohydrate binding"/>
    <property type="evidence" value="ECO:0007669"/>
    <property type="project" value="InterPro"/>
</dbReference>
<dbReference type="GO" id="GO:0004339">
    <property type="term" value="F:glucan 1,4-alpha-glucosidase activity"/>
    <property type="evidence" value="ECO:0000318"/>
    <property type="project" value="GO_Central"/>
</dbReference>
<dbReference type="GO" id="GO:0046872">
    <property type="term" value="F:metal ion binding"/>
    <property type="evidence" value="ECO:0007669"/>
    <property type="project" value="UniProtKB-KW"/>
</dbReference>
<dbReference type="Gene3D" id="2.70.98.10">
    <property type="match status" value="1"/>
</dbReference>
<dbReference type="Gene3D" id="3.20.20.70">
    <property type="entry name" value="Aldolase class I"/>
    <property type="match status" value="1"/>
</dbReference>
<dbReference type="Gene3D" id="2.60.40.1180">
    <property type="entry name" value="Golgi alpha-mannosidase II"/>
    <property type="match status" value="1"/>
</dbReference>
<dbReference type="InterPro" id="IPR013785">
    <property type="entry name" value="Aldolase_TIM"/>
</dbReference>
<dbReference type="InterPro" id="IPR014718">
    <property type="entry name" value="GH-type_carb-bd"/>
</dbReference>
<dbReference type="InterPro" id="IPR029483">
    <property type="entry name" value="GH97_C"/>
</dbReference>
<dbReference type="InterPro" id="IPR019563">
    <property type="entry name" value="GH97_catalytic"/>
</dbReference>
<dbReference type="InterPro" id="IPR029486">
    <property type="entry name" value="GH97_N"/>
</dbReference>
<dbReference type="InterPro" id="IPR013780">
    <property type="entry name" value="Glyco_hydro_b"/>
</dbReference>
<dbReference type="InterPro" id="IPR017853">
    <property type="entry name" value="Glycoside_hydrolase_SF"/>
</dbReference>
<dbReference type="InterPro" id="IPR052720">
    <property type="entry name" value="Glycosyl_hydrolase_97"/>
</dbReference>
<dbReference type="PANTHER" id="PTHR35803">
    <property type="entry name" value="GLUCAN 1,4-ALPHA-GLUCOSIDASE SUSB-RELATED"/>
    <property type="match status" value="1"/>
</dbReference>
<dbReference type="PANTHER" id="PTHR35803:SF2">
    <property type="entry name" value="RETAINING ALPHA-GALACTOSIDASE"/>
    <property type="match status" value="1"/>
</dbReference>
<dbReference type="Pfam" id="PF14509">
    <property type="entry name" value="GH97_C"/>
    <property type="match status" value="1"/>
</dbReference>
<dbReference type="Pfam" id="PF14508">
    <property type="entry name" value="GH97_N"/>
    <property type="match status" value="1"/>
</dbReference>
<dbReference type="Pfam" id="PF10566">
    <property type="entry name" value="Glyco_hydro_97"/>
    <property type="match status" value="1"/>
</dbReference>
<dbReference type="SUPFAM" id="SSF51445">
    <property type="entry name" value="(Trans)glycosidases"/>
    <property type="match status" value="1"/>
</dbReference>
<keyword id="KW-0002">3D-structure</keyword>
<keyword id="KW-0106">Calcium</keyword>
<keyword id="KW-0119">Carbohydrate metabolism</keyword>
<keyword id="KW-0326">Glycosidase</keyword>
<keyword id="KW-0378">Hydrolase</keyword>
<keyword id="KW-0479">Metal-binding</keyword>
<keyword id="KW-1185">Reference proteome</keyword>
<keyword id="KW-0732">Signal</keyword>
<evidence type="ECO:0000255" key="1"/>
<evidence type="ECO:0000269" key="2">
    <source>
    </source>
</evidence>
<evidence type="ECO:0000269" key="3">
    <source>
    </source>
</evidence>
<evidence type="ECO:0000305" key="4"/>
<evidence type="ECO:0000305" key="5">
    <source>
    </source>
</evidence>
<evidence type="ECO:0007829" key="6">
    <source>
        <dbReference type="PDB" id="3A24"/>
    </source>
</evidence>
<evidence type="ECO:0007829" key="7">
    <source>
        <dbReference type="PDB" id="5E1Q"/>
    </source>
</evidence>
<sequence>MKKLTFLLLCVLCTLSLQAQKQFTLASPDGNLKTTITIGDRLTYDITCNGRQILTPSPISMTLDNGTVWGENAKLSGTSRKSVDEMIPSPFYRASELRNHYNGLTLRFKKDWNVEFRAYNDGIAYRFVNQGKKPFRVVTEVSDYCFPSDMTASVPYVKSGKDGDYNSQFFNSFENTYTTDKLSKLNKQRLMFLPLVVDAGDGVKVCITESDLENYPGLYLSASEGANRLSSMHAPYPKRTVQGGHNQLQMLVKEHEDYIAKVDKPRNFPWRIAVVTTTDKDLAATNLSYLLGAPSRMSDLSWIKPGKVAWDWWNDWNLDGVDFVTGVNNPTYKAYIDFASANGIEYVILDEGWAVNLQADLMQVVKEIDLKELVDYAASKNVGIILWAGYHAFERDMENVCRHYAEMGVKGFKVDFMDRDDQEMTAFNYRAAEMCAKYKLILDLHGTHKPAGLNRTYPNVLNFEGVNGLEQMKWSSPSVDQVKYDVMIPFIRQVSGPMDYTQGAMRNASKGNYYPCYSEPMSQGTRCRQLALYVVFESPFNMLCDTPSNYMREPESTAFIAEIPTVWDESIVLDGKMGEYIVTARRKGDVWYVGGITDWSARDIEVDCSFLGDKSYHATLFKDGVNAHRAGRDYKCESFPIKKDGKLKVHLAPGGGFALKIK</sequence>
<protein>
    <recommendedName>
        <fullName>Retaining alpha-galactosidase</fullName>
        <ecNumber>3.2.1.22</ecNumber>
    </recommendedName>
    <alternativeName>
        <fullName>BtGH97b</fullName>
    </alternativeName>
    <alternativeName>
        <fullName>Melibiase</fullName>
    </alternativeName>
</protein>
<reference key="1">
    <citation type="journal article" date="2003" name="Science">
        <title>A genomic view of the human-Bacteroides thetaiotaomicron symbiosis.</title>
        <authorList>
            <person name="Xu J."/>
            <person name="Bjursell M.K."/>
            <person name="Himrod J."/>
            <person name="Deng S."/>
            <person name="Carmichael L.K."/>
            <person name="Chiang H.C."/>
            <person name="Hooper L.V."/>
            <person name="Gordon J.I."/>
        </authorList>
    </citation>
    <scope>NUCLEOTIDE SEQUENCE [LARGE SCALE GENOMIC DNA]</scope>
    <source>
        <strain>ATCC 29148 / DSM 2079 / JCM 5827 / CCUG 10774 / NCTC 10582 / VPI-5482 / E50</strain>
    </source>
</reference>
<reference key="2">
    <citation type="journal article" date="2008" name="Chem. Biol.">
        <title>Divergence of catalytic mechanism within a glycosidase family provides insight into evolution of carbohydrate metabolism by human gut flora.</title>
        <authorList>
            <person name="Gloster T.M."/>
            <person name="Turkenburg J.P."/>
            <person name="Potts J.R."/>
            <person name="Henrissat B."/>
            <person name="Davies G.J."/>
        </authorList>
    </citation>
    <scope>FUNCTION</scope>
    <scope>CATALYTIC ACTIVITY</scope>
    <scope>SUBSTRATE SPECIFICITY</scope>
    <scope>KINETIC PARAMETERS</scope>
    <source>
        <strain>ATCC 29148 / DSM 2079 / JCM 5827 / CCUG 10774 / NCTC 10582 / VPI-5482 / E50</strain>
    </source>
</reference>
<reference key="3">
    <citation type="journal article" date="2009" name="J. Mol. Biol.">
        <title>Catalytic mechanism of retaining alpha-galactosidase belonging to glycoside hydrolase family 97.</title>
        <authorList>
            <person name="Okuyama M."/>
            <person name="Kitamura M."/>
            <person name="Hondoh H."/>
            <person name="Kang M.S."/>
            <person name="Mori H."/>
            <person name="Kimura A."/>
            <person name="Tanaka I."/>
            <person name="Yao M."/>
        </authorList>
    </citation>
    <scope>X-RAY CRYSTALLOGRAPHY (2.30 ANGSTROMS) OF 27-662 IN COMPLEX WITH CALCIUM</scope>
    <scope>FUNCTION</scope>
    <scope>CATALYTIC ACTIVITY</scope>
    <scope>COFACTOR</scope>
    <scope>BIOPHYSICOCHEMICAL PROPERTIES</scope>
    <scope>ACTIVITY REGULATION</scope>
    <scope>ACTIVE SITE</scope>
    <scope>MUTAGENESIS OF ASP-415 AND GLU-470</scope>
    <scope>CATALYTIC MECHANISM</scope>
    <scope>SUBUNIT</scope>
    <source>
        <strain>ATCC 29148 / DSM 2079 / JCM 5827 / CCUG 10774 / NCTC 10582 / VPI-5482 / E50</strain>
    </source>
</reference>
<name>AGAL_BACTN</name>
<comment type="function">
    <text evidence="2 3">Galactosidase that is able to hydrolyze the alpha-1,6 disaccharide melibiose and the synthetic p-nitrophenyl alpha-galactoside substrate (pNP-Gal), with retention of the anomeric configuration. Does not hydrolyze DNP-Glc or pNP-Glc.</text>
</comment>
<comment type="catalytic activity">
    <reaction evidence="2 3">
        <text>Hydrolysis of terminal, non-reducing alpha-D-galactose residues in alpha-D-galactosides, including galactose oligosaccharides, galactomannans and galactolipids.</text>
        <dbReference type="EC" id="3.2.1.22"/>
    </reaction>
</comment>
<comment type="cofactor">
    <cofactor evidence="3">
        <name>Ca(2+)</name>
        <dbReference type="ChEBI" id="CHEBI:29108"/>
    </cofactor>
    <text evidence="3">Binds 1 Ca(2+) ion per subunit.</text>
</comment>
<comment type="activity regulation">
    <text evidence="3">Inhibited by EDTA in vitro.</text>
</comment>
<comment type="biophysicochemical properties">
    <kinetics>
        <KM evidence="2 3">0.31 mM for p-nitrophenyl alpha-galactoside (at pH 6.0 and 37 degrees Celsius)</KM>
        <KM evidence="2 3">1.5 mM for melibiose (at pH 6.6 and 37 degrees Celsius)</KM>
        <text>kcat is 244 sec(-1) with p-nitrophenyl alpha-galactoside as substrate (at pH 6.0 and 37 degrees Celsius).</text>
    </kinetics>
    <phDependence>
        <text evidence="3">Optimum pH is 8.0 with p-nitrophenyl alpha-galactoside as substrate.</text>
    </phDependence>
</comment>
<comment type="subunit">
    <text evidence="5">Monomer.</text>
</comment>
<comment type="similarity">
    <text evidence="4">Belongs to the glycosyl hydrolase 97 family.</text>
</comment>
<organism>
    <name type="scientific">Bacteroides thetaiotaomicron (strain ATCC 29148 / DSM 2079 / JCM 5827 / CCUG 10774 / NCTC 10582 / VPI-5482 / E50)</name>
    <dbReference type="NCBI Taxonomy" id="226186"/>
    <lineage>
        <taxon>Bacteria</taxon>
        <taxon>Pseudomonadati</taxon>
        <taxon>Bacteroidota</taxon>
        <taxon>Bacteroidia</taxon>
        <taxon>Bacteroidales</taxon>
        <taxon>Bacteroidaceae</taxon>
        <taxon>Bacteroides</taxon>
    </lineage>
</organism>
<gene>
    <name type="ordered locus">BT_1871</name>
</gene>
<feature type="signal peptide" evidence="1">
    <location>
        <begin position="1"/>
        <end position="19"/>
    </location>
</feature>
<feature type="chain" id="PRO_0000415272" description="Retaining alpha-galactosidase">
    <location>
        <begin position="20"/>
        <end position="662"/>
    </location>
</feature>
<feature type="active site" description="Nucleophile" evidence="3">
    <location>
        <position position="415"/>
    </location>
</feature>
<feature type="active site" description="Proton donor/acceptor" evidence="3">
    <location>
        <position position="470"/>
    </location>
</feature>
<feature type="binding site" evidence="3">
    <location>
        <position position="174"/>
    </location>
    <ligand>
        <name>Ca(2+)</name>
        <dbReference type="ChEBI" id="CHEBI:29108"/>
    </ligand>
</feature>
<feature type="binding site" evidence="3">
    <location>
        <position position="464"/>
    </location>
    <ligand>
        <name>Ca(2+)</name>
        <dbReference type="ChEBI" id="CHEBI:29108"/>
    </ligand>
</feature>
<feature type="binding site" evidence="3">
    <location>
        <position position="470"/>
    </location>
    <ligand>
        <name>Ca(2+)</name>
        <dbReference type="ChEBI" id="CHEBI:29108"/>
    </ligand>
</feature>
<feature type="mutagenesis site" description="Loss of catalytic activity. The activity is restored by adding an external nucleophilic azide ion." evidence="3">
    <original>D</original>
    <variation>N</variation>
    <variation>G</variation>
    <location>
        <position position="415"/>
    </location>
</feature>
<feature type="mutagenesis site" description="Loss of catalytic activity. No change in substrate affinity." evidence="3">
    <original>E</original>
    <variation>Q</variation>
    <location>
        <position position="470"/>
    </location>
</feature>
<feature type="strand" evidence="7">
    <location>
        <begin position="30"/>
        <end position="48"/>
    </location>
</feature>
<feature type="strand" evidence="7">
    <location>
        <begin position="51"/>
        <end position="63"/>
    </location>
</feature>
<feature type="turn" evidence="6">
    <location>
        <begin position="70"/>
        <end position="72"/>
    </location>
</feature>
<feature type="strand" evidence="7">
    <location>
        <begin position="75"/>
        <end position="88"/>
    </location>
</feature>
<feature type="turn" evidence="7">
    <location>
        <begin position="90"/>
        <end position="93"/>
    </location>
</feature>
<feature type="strand" evidence="7">
    <location>
        <begin position="94"/>
        <end position="108"/>
    </location>
</feature>
<feature type="turn" evidence="7">
    <location>
        <begin position="109"/>
        <end position="111"/>
    </location>
</feature>
<feature type="strand" evidence="7">
    <location>
        <begin position="112"/>
        <end position="119"/>
    </location>
</feature>
<feature type="strand" evidence="7">
    <location>
        <begin position="122"/>
        <end position="129"/>
    </location>
</feature>
<feature type="strand" evidence="7">
    <location>
        <begin position="135"/>
        <end position="142"/>
    </location>
</feature>
<feature type="strand" evidence="7">
    <location>
        <begin position="151"/>
        <end position="154"/>
    </location>
</feature>
<feature type="helix" evidence="7">
    <location>
        <begin position="165"/>
        <end position="169"/>
    </location>
</feature>
<feature type="strand" evidence="7">
    <location>
        <begin position="178"/>
        <end position="181"/>
    </location>
</feature>
<feature type="helix" evidence="7">
    <location>
        <begin position="182"/>
        <end position="184"/>
    </location>
</feature>
<feature type="strand" evidence="7">
    <location>
        <begin position="193"/>
        <end position="200"/>
    </location>
</feature>
<feature type="strand" evidence="7">
    <location>
        <begin position="203"/>
        <end position="210"/>
    </location>
</feature>
<feature type="strand" evidence="7">
    <location>
        <begin position="213"/>
        <end position="215"/>
    </location>
</feature>
<feature type="strand" evidence="7">
    <location>
        <begin position="218"/>
        <end position="233"/>
    </location>
</feature>
<feature type="strand" evidence="7">
    <location>
        <begin position="237"/>
        <end position="244"/>
    </location>
</feature>
<feature type="helix" evidence="7">
    <location>
        <begin position="245"/>
        <end position="247"/>
    </location>
</feature>
<feature type="strand" evidence="7">
    <location>
        <begin position="249"/>
        <end position="255"/>
    </location>
</feature>
<feature type="strand" evidence="7">
    <location>
        <begin position="259"/>
        <end position="262"/>
    </location>
</feature>
<feature type="strand" evidence="7">
    <location>
        <begin position="270"/>
        <end position="278"/>
    </location>
</feature>
<feature type="helix" evidence="7">
    <location>
        <begin position="279"/>
        <end position="284"/>
    </location>
</feature>
<feature type="helix" evidence="7">
    <location>
        <begin position="287"/>
        <end position="290"/>
    </location>
</feature>
<feature type="strand" evidence="7">
    <location>
        <begin position="306"/>
        <end position="309"/>
    </location>
</feature>
<feature type="turn" evidence="7">
    <location>
        <begin position="312"/>
        <end position="316"/>
    </location>
</feature>
<feature type="strand" evidence="7">
    <location>
        <begin position="326"/>
        <end position="328"/>
    </location>
</feature>
<feature type="helix" evidence="7">
    <location>
        <begin position="329"/>
        <end position="341"/>
    </location>
</feature>
<feature type="strand" evidence="7">
    <location>
        <begin position="346"/>
        <end position="349"/>
    </location>
</feature>
<feature type="helix" evidence="7">
    <location>
        <begin position="370"/>
        <end position="378"/>
    </location>
</feature>
<feature type="turn" evidence="7">
    <location>
        <begin position="379"/>
        <end position="381"/>
    </location>
</feature>
<feature type="strand" evidence="7">
    <location>
        <begin position="383"/>
        <end position="389"/>
    </location>
</feature>
<feature type="helix" evidence="7">
    <location>
        <begin position="390"/>
        <end position="394"/>
    </location>
</feature>
<feature type="helix" evidence="7">
    <location>
        <begin position="397"/>
        <end position="407"/>
    </location>
</feature>
<feature type="strand" evidence="7">
    <location>
        <begin position="411"/>
        <end position="415"/>
    </location>
</feature>
<feature type="helix" evidence="7">
    <location>
        <begin position="422"/>
        <end position="437"/>
    </location>
</feature>
<feature type="strand" evidence="7">
    <location>
        <begin position="441"/>
        <end position="444"/>
    </location>
</feature>
<feature type="helix" evidence="7">
    <location>
        <begin position="453"/>
        <end position="456"/>
    </location>
</feature>
<feature type="strand" evidence="7">
    <location>
        <begin position="460"/>
        <end position="463"/>
    </location>
</feature>
<feature type="helix" evidence="7">
    <location>
        <begin position="469"/>
        <end position="473"/>
    </location>
</feature>
<feature type="helix" evidence="7">
    <location>
        <begin position="481"/>
        <end position="487"/>
    </location>
</feature>
<feature type="helix" evidence="7">
    <location>
        <begin position="488"/>
        <end position="490"/>
    </location>
</feature>
<feature type="helix" evidence="7">
    <location>
        <begin position="492"/>
        <end position="494"/>
    </location>
</feature>
<feature type="strand" evidence="7">
    <location>
        <begin position="505"/>
        <end position="508"/>
    </location>
</feature>
<feature type="strand" evidence="7">
    <location>
        <begin position="517"/>
        <end position="519"/>
    </location>
</feature>
<feature type="strand" evidence="7">
    <location>
        <begin position="522"/>
        <end position="524"/>
    </location>
</feature>
<feature type="helix" evidence="7">
    <location>
        <begin position="526"/>
        <end position="535"/>
    </location>
</feature>
<feature type="strand" evidence="7">
    <location>
        <begin position="539"/>
        <end position="543"/>
    </location>
</feature>
<feature type="helix" evidence="7">
    <location>
        <begin position="547"/>
        <end position="551"/>
    </location>
</feature>
<feature type="helix" evidence="7">
    <location>
        <begin position="554"/>
        <end position="562"/>
    </location>
</feature>
<feature type="strand" evidence="7">
    <location>
        <begin position="568"/>
        <end position="576"/>
    </location>
</feature>
<feature type="turn" evidence="7">
    <location>
        <begin position="577"/>
        <end position="579"/>
    </location>
</feature>
<feature type="strand" evidence="7">
    <location>
        <begin position="580"/>
        <end position="587"/>
    </location>
</feature>
<feature type="strand" evidence="7">
    <location>
        <begin position="590"/>
        <end position="597"/>
    </location>
</feature>
<feature type="strand" evidence="7">
    <location>
        <begin position="602"/>
        <end position="607"/>
    </location>
</feature>
<feature type="strand" evidence="7">
    <location>
        <begin position="616"/>
        <end position="623"/>
    </location>
</feature>
<feature type="turn" evidence="7">
    <location>
        <begin position="625"/>
        <end position="629"/>
    </location>
</feature>
<feature type="strand" evidence="7">
    <location>
        <begin position="634"/>
        <end position="641"/>
    </location>
</feature>
<feature type="strand" evidence="7">
    <location>
        <begin position="646"/>
        <end position="651"/>
    </location>
</feature>
<feature type="strand" evidence="7">
    <location>
        <begin position="656"/>
        <end position="662"/>
    </location>
</feature>